<dbReference type="EMBL" id="AE003849">
    <property type="protein sequence ID" value="AAF84416.1"/>
    <property type="molecule type" value="Genomic_DNA"/>
</dbReference>
<dbReference type="PIR" id="G82659">
    <property type="entry name" value="G82659"/>
</dbReference>
<dbReference type="RefSeq" id="WP_010894104.1">
    <property type="nucleotide sequence ID" value="NC_002488.3"/>
</dbReference>
<dbReference type="SMR" id="Q9PCZ7"/>
<dbReference type="STRING" id="160492.XF_1607"/>
<dbReference type="KEGG" id="xfa:XF_1607"/>
<dbReference type="eggNOG" id="COG2900">
    <property type="taxonomic scope" value="Bacteria"/>
</dbReference>
<dbReference type="HOGENOM" id="CLU_180796_4_2_6"/>
<dbReference type="Proteomes" id="UP000000812">
    <property type="component" value="Chromosome"/>
</dbReference>
<dbReference type="Gene3D" id="1.20.5.300">
    <property type="match status" value="1"/>
</dbReference>
<dbReference type="HAMAP" id="MF_00715">
    <property type="entry name" value="SlyX"/>
    <property type="match status" value="1"/>
</dbReference>
<dbReference type="InterPro" id="IPR007236">
    <property type="entry name" value="SlyX"/>
</dbReference>
<dbReference type="NCBIfam" id="NF002024">
    <property type="entry name" value="PRK00846.1"/>
    <property type="match status" value="1"/>
</dbReference>
<dbReference type="PANTHER" id="PTHR36508">
    <property type="entry name" value="PROTEIN SLYX"/>
    <property type="match status" value="1"/>
</dbReference>
<dbReference type="PANTHER" id="PTHR36508:SF1">
    <property type="entry name" value="PROTEIN SLYX"/>
    <property type="match status" value="1"/>
</dbReference>
<dbReference type="Pfam" id="PF04102">
    <property type="entry name" value="SlyX"/>
    <property type="match status" value="1"/>
</dbReference>
<proteinExistence type="inferred from homology"/>
<evidence type="ECO:0000255" key="1">
    <source>
        <dbReference type="HAMAP-Rule" id="MF_00715"/>
    </source>
</evidence>
<organism>
    <name type="scientific">Xylella fastidiosa (strain 9a5c)</name>
    <dbReference type="NCBI Taxonomy" id="160492"/>
    <lineage>
        <taxon>Bacteria</taxon>
        <taxon>Pseudomonadati</taxon>
        <taxon>Pseudomonadota</taxon>
        <taxon>Gammaproteobacteria</taxon>
        <taxon>Lysobacterales</taxon>
        <taxon>Lysobacteraceae</taxon>
        <taxon>Xylella</taxon>
    </lineage>
</organism>
<reference key="1">
    <citation type="journal article" date="2000" name="Nature">
        <title>The genome sequence of the plant pathogen Xylella fastidiosa.</title>
        <authorList>
            <person name="Simpson A.J.G."/>
            <person name="Reinach F.C."/>
            <person name="Arruda P."/>
            <person name="Abreu F.A."/>
            <person name="Acencio M."/>
            <person name="Alvarenga R."/>
            <person name="Alves L.M.C."/>
            <person name="Araya J.E."/>
            <person name="Baia G.S."/>
            <person name="Baptista C.S."/>
            <person name="Barros M.H."/>
            <person name="Bonaccorsi E.D."/>
            <person name="Bordin S."/>
            <person name="Bove J.M."/>
            <person name="Briones M.R.S."/>
            <person name="Bueno M.R.P."/>
            <person name="Camargo A.A."/>
            <person name="Camargo L.E.A."/>
            <person name="Carraro D.M."/>
            <person name="Carrer H."/>
            <person name="Colauto N.B."/>
            <person name="Colombo C."/>
            <person name="Costa F.F."/>
            <person name="Costa M.C.R."/>
            <person name="Costa-Neto C.M."/>
            <person name="Coutinho L.L."/>
            <person name="Cristofani M."/>
            <person name="Dias-Neto E."/>
            <person name="Docena C."/>
            <person name="El-Dorry H."/>
            <person name="Facincani A.P."/>
            <person name="Ferreira A.J.S."/>
            <person name="Ferreira V.C.A."/>
            <person name="Ferro J.A."/>
            <person name="Fraga J.S."/>
            <person name="Franca S.C."/>
            <person name="Franco M.C."/>
            <person name="Frohme M."/>
            <person name="Furlan L.R."/>
            <person name="Garnier M."/>
            <person name="Goldman G.H."/>
            <person name="Goldman M.H.S."/>
            <person name="Gomes S.L."/>
            <person name="Gruber A."/>
            <person name="Ho P.L."/>
            <person name="Hoheisel J.D."/>
            <person name="Junqueira M.L."/>
            <person name="Kemper E.L."/>
            <person name="Kitajima J.P."/>
            <person name="Krieger J.E."/>
            <person name="Kuramae E.E."/>
            <person name="Laigret F."/>
            <person name="Lambais M.R."/>
            <person name="Leite L.C.C."/>
            <person name="Lemos E.G.M."/>
            <person name="Lemos M.V.F."/>
            <person name="Lopes S.A."/>
            <person name="Lopes C.R."/>
            <person name="Machado J.A."/>
            <person name="Machado M.A."/>
            <person name="Madeira A.M.B.N."/>
            <person name="Madeira H.M.F."/>
            <person name="Marino C.L."/>
            <person name="Marques M.V."/>
            <person name="Martins E.A.L."/>
            <person name="Martins E.M.F."/>
            <person name="Matsukuma A.Y."/>
            <person name="Menck C.F.M."/>
            <person name="Miracca E.C."/>
            <person name="Miyaki C.Y."/>
            <person name="Monteiro-Vitorello C.B."/>
            <person name="Moon D.H."/>
            <person name="Nagai M.A."/>
            <person name="Nascimento A.L.T.O."/>
            <person name="Netto L.E.S."/>
            <person name="Nhani A. Jr."/>
            <person name="Nobrega F.G."/>
            <person name="Nunes L.R."/>
            <person name="Oliveira M.A."/>
            <person name="de Oliveira M.C."/>
            <person name="de Oliveira R.C."/>
            <person name="Palmieri D.A."/>
            <person name="Paris A."/>
            <person name="Peixoto B.R."/>
            <person name="Pereira G.A.G."/>
            <person name="Pereira H.A. Jr."/>
            <person name="Pesquero J.B."/>
            <person name="Quaggio R.B."/>
            <person name="Roberto P.G."/>
            <person name="Rodrigues V."/>
            <person name="de Rosa A.J.M."/>
            <person name="de Rosa V.E. Jr."/>
            <person name="de Sa R.G."/>
            <person name="Santelli R.V."/>
            <person name="Sawasaki H.E."/>
            <person name="da Silva A.C.R."/>
            <person name="da Silva A.M."/>
            <person name="da Silva F.R."/>
            <person name="Silva W.A. Jr."/>
            <person name="da Silveira J.F."/>
            <person name="Silvestri M.L.Z."/>
            <person name="Siqueira W.J."/>
            <person name="de Souza A.A."/>
            <person name="de Souza A.P."/>
            <person name="Terenzi M.F."/>
            <person name="Truffi D."/>
            <person name="Tsai S.M."/>
            <person name="Tsuhako M.H."/>
            <person name="Vallada H."/>
            <person name="Van Sluys M.A."/>
            <person name="Verjovski-Almeida S."/>
            <person name="Vettore A.L."/>
            <person name="Zago M.A."/>
            <person name="Zatz M."/>
            <person name="Meidanis J."/>
            <person name="Setubal J.C."/>
        </authorList>
    </citation>
    <scope>NUCLEOTIDE SEQUENCE [LARGE SCALE GENOMIC DNA]</scope>
    <source>
        <strain>9a5c</strain>
    </source>
</reference>
<protein>
    <recommendedName>
        <fullName evidence="1">Protein SlyX homolog</fullName>
    </recommendedName>
</protein>
<name>SLYX_XYLFA</name>
<gene>
    <name evidence="1" type="primary">slyX</name>
    <name type="ordered locus">XF_1607</name>
</gene>
<comment type="similarity">
    <text evidence="1">Belongs to the SlyX family.</text>
</comment>
<accession>Q9PCZ7</accession>
<feature type="chain" id="PRO_0000209222" description="Protein SlyX homolog">
    <location>
        <begin position="1"/>
        <end position="78"/>
    </location>
</feature>
<sequence>MHEELLTLCDCAFEARLIELETRVSFQEQALTEISEALAETRLIGARNAELMRHLLEELGKVRNTLYEHPIDEPPPHY</sequence>